<comment type="function">
    <text evidence="1">Condenses 4-methyl-5-(beta-hydroxyethyl)thiazole monophosphate (THZ-P) and 2-methyl-4-amino-5-hydroxymethyl pyrimidine pyrophosphate (HMP-PP) to form thiamine monophosphate (TMP).</text>
</comment>
<comment type="catalytic activity">
    <reaction evidence="1">
        <text>2-[(2R,5Z)-2-carboxy-4-methylthiazol-5(2H)-ylidene]ethyl phosphate + 4-amino-2-methyl-5-(diphosphooxymethyl)pyrimidine + 2 H(+) = thiamine phosphate + CO2 + diphosphate</text>
        <dbReference type="Rhea" id="RHEA:47844"/>
        <dbReference type="ChEBI" id="CHEBI:15378"/>
        <dbReference type="ChEBI" id="CHEBI:16526"/>
        <dbReference type="ChEBI" id="CHEBI:33019"/>
        <dbReference type="ChEBI" id="CHEBI:37575"/>
        <dbReference type="ChEBI" id="CHEBI:57841"/>
        <dbReference type="ChEBI" id="CHEBI:62899"/>
        <dbReference type="EC" id="2.5.1.3"/>
    </reaction>
</comment>
<comment type="catalytic activity">
    <reaction evidence="1">
        <text>2-(2-carboxy-4-methylthiazol-5-yl)ethyl phosphate + 4-amino-2-methyl-5-(diphosphooxymethyl)pyrimidine + 2 H(+) = thiamine phosphate + CO2 + diphosphate</text>
        <dbReference type="Rhea" id="RHEA:47848"/>
        <dbReference type="ChEBI" id="CHEBI:15378"/>
        <dbReference type="ChEBI" id="CHEBI:16526"/>
        <dbReference type="ChEBI" id="CHEBI:33019"/>
        <dbReference type="ChEBI" id="CHEBI:37575"/>
        <dbReference type="ChEBI" id="CHEBI:57841"/>
        <dbReference type="ChEBI" id="CHEBI:62890"/>
        <dbReference type="EC" id="2.5.1.3"/>
    </reaction>
</comment>
<comment type="catalytic activity">
    <reaction evidence="1">
        <text>4-methyl-5-(2-phosphooxyethyl)-thiazole + 4-amino-2-methyl-5-(diphosphooxymethyl)pyrimidine + H(+) = thiamine phosphate + diphosphate</text>
        <dbReference type="Rhea" id="RHEA:22328"/>
        <dbReference type="ChEBI" id="CHEBI:15378"/>
        <dbReference type="ChEBI" id="CHEBI:33019"/>
        <dbReference type="ChEBI" id="CHEBI:37575"/>
        <dbReference type="ChEBI" id="CHEBI:57841"/>
        <dbReference type="ChEBI" id="CHEBI:58296"/>
        <dbReference type="EC" id="2.5.1.3"/>
    </reaction>
</comment>
<comment type="cofactor">
    <cofactor evidence="1">
        <name>Mg(2+)</name>
        <dbReference type="ChEBI" id="CHEBI:18420"/>
    </cofactor>
    <text evidence="1">Binds 1 Mg(2+) ion per subunit.</text>
</comment>
<comment type="pathway">
    <text evidence="1">Cofactor biosynthesis; thiamine diphosphate biosynthesis; thiamine phosphate from 4-amino-2-methyl-5-diphosphomethylpyrimidine and 4-methyl-5-(2-phosphoethyl)-thiazole: step 1/1.</text>
</comment>
<comment type="similarity">
    <text evidence="1">Belongs to the thiamine-phosphate synthase family.</text>
</comment>
<organism>
    <name type="scientific">Salmonella typhimurium (strain LT2 / SGSC1412 / ATCC 700720)</name>
    <dbReference type="NCBI Taxonomy" id="99287"/>
    <lineage>
        <taxon>Bacteria</taxon>
        <taxon>Pseudomonadati</taxon>
        <taxon>Pseudomonadota</taxon>
        <taxon>Gammaproteobacteria</taxon>
        <taxon>Enterobacterales</taxon>
        <taxon>Enterobacteriaceae</taxon>
        <taxon>Salmonella</taxon>
    </lineage>
</organism>
<sequence length="211" mass="22983">MYQPDFPTVPFRLGLYPVVDSVEWIERLLESGVRTIQLRIKDKRDEEVEADVIAAIALGRRYNARLFINDYWRLAIKHRAYGVHLGQEDLETTDLKAIQAAGLRLGVSTHDDMEIDVALAAKPSYIALGHVFPTQTKQMPSAPQGLAQLASHIERLADYPTVAIGGISLERAPAVLATGVGSIAVVSAITQAADWREATAELLAIAGVGDE</sequence>
<proteinExistence type="inferred from homology"/>
<accession>Q9L9I8</accession>
<dbReference type="EC" id="2.5.1.3" evidence="1"/>
<dbReference type="EMBL" id="AF170176">
    <property type="protein sequence ID" value="AAF33508.1"/>
    <property type="molecule type" value="Genomic_DNA"/>
</dbReference>
<dbReference type="EMBL" id="AE006468">
    <property type="protein sequence ID" value="AAL22991.1"/>
    <property type="molecule type" value="Genomic_DNA"/>
</dbReference>
<dbReference type="RefSeq" id="NP_463032.1">
    <property type="nucleotide sequence ID" value="NC_003197.2"/>
</dbReference>
<dbReference type="RefSeq" id="WP_000284648.1">
    <property type="nucleotide sequence ID" value="NC_003197.2"/>
</dbReference>
<dbReference type="SMR" id="Q9L9I8"/>
<dbReference type="STRING" id="99287.STM4163"/>
<dbReference type="PaxDb" id="99287-STM4163"/>
<dbReference type="GeneID" id="1255689"/>
<dbReference type="KEGG" id="stm:STM4163"/>
<dbReference type="PATRIC" id="fig|99287.12.peg.4377"/>
<dbReference type="HOGENOM" id="CLU_018272_3_3_6"/>
<dbReference type="OMA" id="QDFYHIK"/>
<dbReference type="PhylomeDB" id="Q9L9I8"/>
<dbReference type="BioCyc" id="SENT99287:STM4163-MONOMER"/>
<dbReference type="UniPathway" id="UPA00060">
    <property type="reaction ID" value="UER00141"/>
</dbReference>
<dbReference type="Proteomes" id="UP000001014">
    <property type="component" value="Chromosome"/>
</dbReference>
<dbReference type="GO" id="GO:0005737">
    <property type="term" value="C:cytoplasm"/>
    <property type="evidence" value="ECO:0000318"/>
    <property type="project" value="GO_Central"/>
</dbReference>
<dbReference type="GO" id="GO:0000287">
    <property type="term" value="F:magnesium ion binding"/>
    <property type="evidence" value="ECO:0007669"/>
    <property type="project" value="UniProtKB-UniRule"/>
</dbReference>
<dbReference type="GO" id="GO:0004789">
    <property type="term" value="F:thiamine-phosphate diphosphorylase activity"/>
    <property type="evidence" value="ECO:0000318"/>
    <property type="project" value="GO_Central"/>
</dbReference>
<dbReference type="GO" id="GO:0009228">
    <property type="term" value="P:thiamine biosynthetic process"/>
    <property type="evidence" value="ECO:0000318"/>
    <property type="project" value="GO_Central"/>
</dbReference>
<dbReference type="GO" id="GO:0009229">
    <property type="term" value="P:thiamine diphosphate biosynthetic process"/>
    <property type="evidence" value="ECO:0007669"/>
    <property type="project" value="UniProtKB-UniRule"/>
</dbReference>
<dbReference type="CDD" id="cd00564">
    <property type="entry name" value="TMP_TenI"/>
    <property type="match status" value="1"/>
</dbReference>
<dbReference type="FunFam" id="3.20.20.70:FF:000064">
    <property type="entry name" value="Thiamine-phosphate synthase"/>
    <property type="match status" value="1"/>
</dbReference>
<dbReference type="Gene3D" id="3.20.20.70">
    <property type="entry name" value="Aldolase class I"/>
    <property type="match status" value="1"/>
</dbReference>
<dbReference type="HAMAP" id="MF_00097">
    <property type="entry name" value="TMP_synthase"/>
    <property type="match status" value="1"/>
</dbReference>
<dbReference type="InterPro" id="IPR013785">
    <property type="entry name" value="Aldolase_TIM"/>
</dbReference>
<dbReference type="InterPro" id="IPR036206">
    <property type="entry name" value="ThiamineP_synth_sf"/>
</dbReference>
<dbReference type="InterPro" id="IPR022998">
    <property type="entry name" value="ThiamineP_synth_TenI"/>
</dbReference>
<dbReference type="InterPro" id="IPR034291">
    <property type="entry name" value="TMP_synthase"/>
</dbReference>
<dbReference type="NCBIfam" id="NF002904">
    <property type="entry name" value="PRK03512.1"/>
    <property type="match status" value="1"/>
</dbReference>
<dbReference type="NCBIfam" id="TIGR00693">
    <property type="entry name" value="thiE"/>
    <property type="match status" value="1"/>
</dbReference>
<dbReference type="PANTHER" id="PTHR20857">
    <property type="entry name" value="THIAMINE-PHOSPHATE PYROPHOSPHORYLASE"/>
    <property type="match status" value="1"/>
</dbReference>
<dbReference type="PANTHER" id="PTHR20857:SF15">
    <property type="entry name" value="THIAMINE-PHOSPHATE SYNTHASE"/>
    <property type="match status" value="1"/>
</dbReference>
<dbReference type="Pfam" id="PF02581">
    <property type="entry name" value="TMP-TENI"/>
    <property type="match status" value="1"/>
</dbReference>
<dbReference type="SUPFAM" id="SSF51391">
    <property type="entry name" value="Thiamin phosphate synthase"/>
    <property type="match status" value="1"/>
</dbReference>
<name>THIE_SALTY</name>
<keyword id="KW-0460">Magnesium</keyword>
<keyword id="KW-0479">Metal-binding</keyword>
<keyword id="KW-1185">Reference proteome</keyword>
<keyword id="KW-0784">Thiamine biosynthesis</keyword>
<keyword id="KW-0808">Transferase</keyword>
<reference key="1">
    <citation type="journal article" date="2001" name="Nature">
        <title>Complete genome sequence of Salmonella enterica serovar Typhimurium LT2.</title>
        <authorList>
            <person name="McClelland M."/>
            <person name="Sanderson K.E."/>
            <person name="Spieth J."/>
            <person name="Clifton S.W."/>
            <person name="Latreille P."/>
            <person name="Courtney L."/>
            <person name="Porwollik S."/>
            <person name="Ali J."/>
            <person name="Dante M."/>
            <person name="Du F."/>
            <person name="Hou S."/>
            <person name="Layman D."/>
            <person name="Leonard S."/>
            <person name="Nguyen C."/>
            <person name="Scott K."/>
            <person name="Holmes A."/>
            <person name="Grewal N."/>
            <person name="Mulvaney E."/>
            <person name="Ryan E."/>
            <person name="Sun H."/>
            <person name="Florea L."/>
            <person name="Miller W."/>
            <person name="Stoneking T."/>
            <person name="Nhan M."/>
            <person name="Waterston R."/>
            <person name="Wilson R.K."/>
        </authorList>
    </citation>
    <scope>NUCLEOTIDE SEQUENCE [LARGE SCALE GENOMIC DNA]</scope>
    <source>
        <strain>LT2 / SGSC1412 / ATCC 700720</strain>
    </source>
</reference>
<gene>
    <name evidence="1" type="primary">thiE</name>
    <name type="ordered locus">STM4163</name>
    <name type="ORF">STMF1.34</name>
</gene>
<evidence type="ECO:0000255" key="1">
    <source>
        <dbReference type="HAMAP-Rule" id="MF_00097"/>
    </source>
</evidence>
<feature type="chain" id="PRO_0000157040" description="Thiamine-phosphate synthase">
    <location>
        <begin position="1"/>
        <end position="211"/>
    </location>
</feature>
<feature type="binding site" evidence="1">
    <location>
        <begin position="37"/>
        <end position="41"/>
    </location>
    <ligand>
        <name>4-amino-2-methyl-5-(diphosphooxymethyl)pyrimidine</name>
        <dbReference type="ChEBI" id="CHEBI:57841"/>
    </ligand>
</feature>
<feature type="binding site" evidence="1">
    <location>
        <position position="69"/>
    </location>
    <ligand>
        <name>4-amino-2-methyl-5-(diphosphooxymethyl)pyrimidine</name>
        <dbReference type="ChEBI" id="CHEBI:57841"/>
    </ligand>
</feature>
<feature type="binding site" evidence="1">
    <location>
        <position position="70"/>
    </location>
    <ligand>
        <name>Mg(2+)</name>
        <dbReference type="ChEBI" id="CHEBI:18420"/>
    </ligand>
</feature>
<feature type="binding site" evidence="1">
    <location>
        <position position="89"/>
    </location>
    <ligand>
        <name>Mg(2+)</name>
        <dbReference type="ChEBI" id="CHEBI:18420"/>
    </ligand>
</feature>
<feature type="binding site" evidence="1">
    <location>
        <position position="108"/>
    </location>
    <ligand>
        <name>4-amino-2-methyl-5-(diphosphooxymethyl)pyrimidine</name>
        <dbReference type="ChEBI" id="CHEBI:57841"/>
    </ligand>
</feature>
<feature type="binding site" evidence="1">
    <location>
        <begin position="134"/>
        <end position="136"/>
    </location>
    <ligand>
        <name>2-[(2R,5Z)-2-carboxy-4-methylthiazol-5(2H)-ylidene]ethyl phosphate</name>
        <dbReference type="ChEBI" id="CHEBI:62899"/>
    </ligand>
</feature>
<feature type="binding site" evidence="1">
    <location>
        <position position="137"/>
    </location>
    <ligand>
        <name>4-amino-2-methyl-5-(diphosphooxymethyl)pyrimidine</name>
        <dbReference type="ChEBI" id="CHEBI:57841"/>
    </ligand>
</feature>
<feature type="binding site" evidence="1">
    <location>
        <position position="166"/>
    </location>
    <ligand>
        <name>2-[(2R,5Z)-2-carboxy-4-methylthiazol-5(2H)-ylidene]ethyl phosphate</name>
        <dbReference type="ChEBI" id="CHEBI:62899"/>
    </ligand>
</feature>
<feature type="binding site" evidence="1">
    <location>
        <begin position="186"/>
        <end position="187"/>
    </location>
    <ligand>
        <name>2-[(2R,5Z)-2-carboxy-4-methylthiazol-5(2H)-ylidene]ethyl phosphate</name>
        <dbReference type="ChEBI" id="CHEBI:62899"/>
    </ligand>
</feature>
<protein>
    <recommendedName>
        <fullName evidence="1">Thiamine-phosphate synthase</fullName>
        <shortName evidence="1">TP synthase</shortName>
        <shortName evidence="1">TPS</shortName>
        <ecNumber evidence="1">2.5.1.3</ecNumber>
    </recommendedName>
    <alternativeName>
        <fullName evidence="1">Thiamine-phosphate pyrophosphorylase</fullName>
        <shortName evidence="1">TMP pyrophosphorylase</shortName>
        <shortName evidence="1">TMP-PPase</shortName>
    </alternativeName>
</protein>